<proteinExistence type="inferred from homology"/>
<feature type="chain" id="PRO_1000072466" description="Small ribosomal subunit protein uS10">
    <location>
        <begin position="1"/>
        <end position="103"/>
    </location>
</feature>
<sequence>MANQRIRIRLKSFDHRLIDQSAQEIVDTAKRTGAQVCGPVPLPTRIERFNVLTSPHVNKDARDQYEIRTHKRMLDIVQPTDKTVDALMKLDLAAGVDVQIALG</sequence>
<dbReference type="EMBL" id="CP000713">
    <property type="protein sequence ID" value="ABQ93380.1"/>
    <property type="molecule type" value="Genomic_DNA"/>
</dbReference>
<dbReference type="SMR" id="A5WCI9"/>
<dbReference type="STRING" id="349106.PsycPRwf_0425"/>
<dbReference type="KEGG" id="prw:PsycPRwf_0425"/>
<dbReference type="eggNOG" id="COG0051">
    <property type="taxonomic scope" value="Bacteria"/>
</dbReference>
<dbReference type="HOGENOM" id="CLU_122625_1_3_6"/>
<dbReference type="GO" id="GO:1990904">
    <property type="term" value="C:ribonucleoprotein complex"/>
    <property type="evidence" value="ECO:0007669"/>
    <property type="project" value="UniProtKB-KW"/>
</dbReference>
<dbReference type="GO" id="GO:0005840">
    <property type="term" value="C:ribosome"/>
    <property type="evidence" value="ECO:0007669"/>
    <property type="project" value="UniProtKB-KW"/>
</dbReference>
<dbReference type="GO" id="GO:0003735">
    <property type="term" value="F:structural constituent of ribosome"/>
    <property type="evidence" value="ECO:0007669"/>
    <property type="project" value="InterPro"/>
</dbReference>
<dbReference type="GO" id="GO:0000049">
    <property type="term" value="F:tRNA binding"/>
    <property type="evidence" value="ECO:0007669"/>
    <property type="project" value="UniProtKB-UniRule"/>
</dbReference>
<dbReference type="GO" id="GO:0006412">
    <property type="term" value="P:translation"/>
    <property type="evidence" value="ECO:0007669"/>
    <property type="project" value="UniProtKB-UniRule"/>
</dbReference>
<dbReference type="FunFam" id="3.30.70.600:FF:000001">
    <property type="entry name" value="30S ribosomal protein S10"/>
    <property type="match status" value="1"/>
</dbReference>
<dbReference type="Gene3D" id="3.30.70.600">
    <property type="entry name" value="Ribosomal protein S10 domain"/>
    <property type="match status" value="1"/>
</dbReference>
<dbReference type="HAMAP" id="MF_00508">
    <property type="entry name" value="Ribosomal_uS10"/>
    <property type="match status" value="1"/>
</dbReference>
<dbReference type="InterPro" id="IPR001848">
    <property type="entry name" value="Ribosomal_uS10"/>
</dbReference>
<dbReference type="InterPro" id="IPR018268">
    <property type="entry name" value="Ribosomal_uS10_CS"/>
</dbReference>
<dbReference type="InterPro" id="IPR027486">
    <property type="entry name" value="Ribosomal_uS10_dom"/>
</dbReference>
<dbReference type="InterPro" id="IPR036838">
    <property type="entry name" value="Ribosomal_uS10_dom_sf"/>
</dbReference>
<dbReference type="NCBIfam" id="NF001861">
    <property type="entry name" value="PRK00596.1"/>
    <property type="match status" value="1"/>
</dbReference>
<dbReference type="NCBIfam" id="TIGR01049">
    <property type="entry name" value="rpsJ_bact"/>
    <property type="match status" value="1"/>
</dbReference>
<dbReference type="PANTHER" id="PTHR11700">
    <property type="entry name" value="30S RIBOSOMAL PROTEIN S10 FAMILY MEMBER"/>
    <property type="match status" value="1"/>
</dbReference>
<dbReference type="Pfam" id="PF00338">
    <property type="entry name" value="Ribosomal_S10"/>
    <property type="match status" value="1"/>
</dbReference>
<dbReference type="PRINTS" id="PR00971">
    <property type="entry name" value="RIBOSOMALS10"/>
</dbReference>
<dbReference type="SMART" id="SM01403">
    <property type="entry name" value="Ribosomal_S10"/>
    <property type="match status" value="1"/>
</dbReference>
<dbReference type="SUPFAM" id="SSF54999">
    <property type="entry name" value="Ribosomal protein S10"/>
    <property type="match status" value="1"/>
</dbReference>
<dbReference type="PROSITE" id="PS00361">
    <property type="entry name" value="RIBOSOMAL_S10"/>
    <property type="match status" value="1"/>
</dbReference>
<reference key="1">
    <citation type="submission" date="2007-05" db="EMBL/GenBank/DDBJ databases">
        <title>Complete sequence of chromosome of Psychrobacter sp. PRwf-1.</title>
        <authorList>
            <consortium name="US DOE Joint Genome Institute"/>
            <person name="Copeland A."/>
            <person name="Lucas S."/>
            <person name="Lapidus A."/>
            <person name="Barry K."/>
            <person name="Detter J.C."/>
            <person name="Glavina del Rio T."/>
            <person name="Hammon N."/>
            <person name="Israni S."/>
            <person name="Dalin E."/>
            <person name="Tice H."/>
            <person name="Pitluck S."/>
            <person name="Chain P."/>
            <person name="Malfatti S."/>
            <person name="Shin M."/>
            <person name="Vergez L."/>
            <person name="Schmutz J."/>
            <person name="Larimer F."/>
            <person name="Land M."/>
            <person name="Hauser L."/>
            <person name="Kyrpides N."/>
            <person name="Kim E."/>
            <person name="Tiedje J."/>
            <person name="Richardson P."/>
        </authorList>
    </citation>
    <scope>NUCLEOTIDE SEQUENCE [LARGE SCALE GENOMIC DNA]</scope>
    <source>
        <strain>PRwf-1</strain>
    </source>
</reference>
<name>RS10_PSYWF</name>
<gene>
    <name evidence="1" type="primary">rpsJ</name>
    <name type="ordered locus">PsycPRwf_0425</name>
</gene>
<evidence type="ECO:0000255" key="1">
    <source>
        <dbReference type="HAMAP-Rule" id="MF_00508"/>
    </source>
</evidence>
<evidence type="ECO:0000305" key="2"/>
<organism>
    <name type="scientific">Psychrobacter sp. (strain PRwf-1)</name>
    <dbReference type="NCBI Taxonomy" id="349106"/>
    <lineage>
        <taxon>Bacteria</taxon>
        <taxon>Pseudomonadati</taxon>
        <taxon>Pseudomonadota</taxon>
        <taxon>Gammaproteobacteria</taxon>
        <taxon>Moraxellales</taxon>
        <taxon>Moraxellaceae</taxon>
        <taxon>Psychrobacter</taxon>
    </lineage>
</organism>
<keyword id="KW-0687">Ribonucleoprotein</keyword>
<keyword id="KW-0689">Ribosomal protein</keyword>
<comment type="function">
    <text evidence="1">Involved in the binding of tRNA to the ribosomes.</text>
</comment>
<comment type="subunit">
    <text evidence="1">Part of the 30S ribosomal subunit.</text>
</comment>
<comment type="similarity">
    <text evidence="1">Belongs to the universal ribosomal protein uS10 family.</text>
</comment>
<protein>
    <recommendedName>
        <fullName evidence="1">Small ribosomal subunit protein uS10</fullName>
    </recommendedName>
    <alternativeName>
        <fullName evidence="2">30S ribosomal protein S10</fullName>
    </alternativeName>
</protein>
<accession>A5WCI9</accession>